<proteinExistence type="inferred from homology"/>
<gene>
    <name evidence="1" type="primary">aroA</name>
    <name type="ordered locus">Bphyt_3003</name>
</gene>
<reference key="1">
    <citation type="journal article" date="2011" name="J. Bacteriol.">
        <title>Complete genome sequence of the plant growth-promoting endophyte Burkholderia phytofirmans strain PsJN.</title>
        <authorList>
            <person name="Weilharter A."/>
            <person name="Mitter B."/>
            <person name="Shin M.V."/>
            <person name="Chain P.S."/>
            <person name="Nowak J."/>
            <person name="Sessitsch A."/>
        </authorList>
    </citation>
    <scope>NUCLEOTIDE SEQUENCE [LARGE SCALE GENOMIC DNA]</scope>
    <source>
        <strain>DSM 17436 / LMG 22146 / PsJN</strain>
    </source>
</reference>
<keyword id="KW-0028">Amino-acid biosynthesis</keyword>
<keyword id="KW-0057">Aromatic amino acid biosynthesis</keyword>
<keyword id="KW-0963">Cytoplasm</keyword>
<keyword id="KW-0808">Transferase</keyword>
<sequence>MEFLDLGPFSRASGTIRLPGSKSISNRVLLLAALAEGETTITNLLDSDDTRVMLDALEKLGVRLKRDGDTCVVTGTRGAFTARTADLFLGNAGTAVRPLTAALAVNGGDYRIHGVPRMHERPIGDLVDGLRQLGARIDYEENEGYPPLRIRPGQINADAPITVRGDVSSQFLTSLLMTLPLLRTESGVSTVQVDGELISKPYIEITIKLMERFGIKVERHGWHQFVVPAGQRYQSPGTIMVEGDASSASYFLAAGALGGGPLRVEGVGRASIQGDVGFADALIKMGANLQMGDDWIEVRGVGHDSGKLEPIDMDCNLIPDAAMTIAVAALFADGATTLRNIASWRVKETDRLAAMATELRKVGAKVQEGEDYLVIEPPEKLTPNAAIDTYDDHRMAMCFSLVSLGGVPVRINDPKCVGKTFPDYFERFTALAQP</sequence>
<comment type="function">
    <text evidence="1">Catalyzes the transfer of the enolpyruvyl moiety of phosphoenolpyruvate (PEP) to the 5-hydroxyl of shikimate-3-phosphate (S3P) to produce enolpyruvyl shikimate-3-phosphate and inorganic phosphate.</text>
</comment>
<comment type="catalytic activity">
    <reaction evidence="1">
        <text>3-phosphoshikimate + phosphoenolpyruvate = 5-O-(1-carboxyvinyl)-3-phosphoshikimate + phosphate</text>
        <dbReference type="Rhea" id="RHEA:21256"/>
        <dbReference type="ChEBI" id="CHEBI:43474"/>
        <dbReference type="ChEBI" id="CHEBI:57701"/>
        <dbReference type="ChEBI" id="CHEBI:58702"/>
        <dbReference type="ChEBI" id="CHEBI:145989"/>
        <dbReference type="EC" id="2.5.1.19"/>
    </reaction>
    <physiologicalReaction direction="left-to-right" evidence="1">
        <dbReference type="Rhea" id="RHEA:21257"/>
    </physiologicalReaction>
</comment>
<comment type="pathway">
    <text evidence="1">Metabolic intermediate biosynthesis; chorismate biosynthesis; chorismate from D-erythrose 4-phosphate and phosphoenolpyruvate: step 6/7.</text>
</comment>
<comment type="subunit">
    <text evidence="1">Monomer.</text>
</comment>
<comment type="subcellular location">
    <subcellularLocation>
        <location evidence="1">Cytoplasm</location>
    </subcellularLocation>
</comment>
<comment type="similarity">
    <text evidence="1">Belongs to the EPSP synthase family.</text>
</comment>
<feature type="chain" id="PRO_1000099674" description="3-phosphoshikimate 1-carboxyvinyltransferase">
    <location>
        <begin position="1"/>
        <end position="434"/>
    </location>
</feature>
<feature type="active site" description="Proton acceptor" evidence="1">
    <location>
        <position position="320"/>
    </location>
</feature>
<feature type="binding site" evidence="1">
    <location>
        <position position="22"/>
    </location>
    <ligand>
        <name>3-phosphoshikimate</name>
        <dbReference type="ChEBI" id="CHEBI:145989"/>
    </ligand>
</feature>
<feature type="binding site" evidence="1">
    <location>
        <position position="22"/>
    </location>
    <ligand>
        <name>phosphoenolpyruvate</name>
        <dbReference type="ChEBI" id="CHEBI:58702"/>
    </ligand>
</feature>
<feature type="binding site" evidence="1">
    <location>
        <position position="23"/>
    </location>
    <ligand>
        <name>3-phosphoshikimate</name>
        <dbReference type="ChEBI" id="CHEBI:145989"/>
    </ligand>
</feature>
<feature type="binding site" evidence="1">
    <location>
        <position position="27"/>
    </location>
    <ligand>
        <name>3-phosphoshikimate</name>
        <dbReference type="ChEBI" id="CHEBI:145989"/>
    </ligand>
</feature>
<feature type="binding site" evidence="1">
    <location>
        <position position="93"/>
    </location>
    <ligand>
        <name>phosphoenolpyruvate</name>
        <dbReference type="ChEBI" id="CHEBI:58702"/>
    </ligand>
</feature>
<feature type="binding site" evidence="1">
    <location>
        <position position="121"/>
    </location>
    <ligand>
        <name>phosphoenolpyruvate</name>
        <dbReference type="ChEBI" id="CHEBI:58702"/>
    </ligand>
</feature>
<feature type="binding site" evidence="1">
    <location>
        <position position="168"/>
    </location>
    <ligand>
        <name>3-phosphoshikimate</name>
        <dbReference type="ChEBI" id="CHEBI:145989"/>
    </ligand>
</feature>
<feature type="binding site" evidence="1">
    <location>
        <position position="169"/>
    </location>
    <ligand>
        <name>3-phosphoshikimate</name>
        <dbReference type="ChEBI" id="CHEBI:145989"/>
    </ligand>
</feature>
<feature type="binding site" evidence="1">
    <location>
        <position position="170"/>
    </location>
    <ligand>
        <name>3-phosphoshikimate</name>
        <dbReference type="ChEBI" id="CHEBI:145989"/>
    </ligand>
</feature>
<feature type="binding site" evidence="1">
    <location>
        <position position="170"/>
    </location>
    <ligand>
        <name>phosphoenolpyruvate</name>
        <dbReference type="ChEBI" id="CHEBI:58702"/>
    </ligand>
</feature>
<feature type="binding site" evidence="1">
    <location>
        <position position="199"/>
    </location>
    <ligand>
        <name>3-phosphoshikimate</name>
        <dbReference type="ChEBI" id="CHEBI:145989"/>
    </ligand>
</feature>
<feature type="binding site" evidence="1">
    <location>
        <position position="320"/>
    </location>
    <ligand>
        <name>3-phosphoshikimate</name>
        <dbReference type="ChEBI" id="CHEBI:145989"/>
    </ligand>
</feature>
<feature type="binding site" evidence="1">
    <location>
        <position position="347"/>
    </location>
    <ligand>
        <name>3-phosphoshikimate</name>
        <dbReference type="ChEBI" id="CHEBI:145989"/>
    </ligand>
</feature>
<feature type="binding site" evidence="1">
    <location>
        <position position="351"/>
    </location>
    <ligand>
        <name>phosphoenolpyruvate</name>
        <dbReference type="ChEBI" id="CHEBI:58702"/>
    </ligand>
</feature>
<feature type="binding site" evidence="1">
    <location>
        <position position="394"/>
    </location>
    <ligand>
        <name>phosphoenolpyruvate</name>
        <dbReference type="ChEBI" id="CHEBI:58702"/>
    </ligand>
</feature>
<feature type="binding site" evidence="1">
    <location>
        <position position="419"/>
    </location>
    <ligand>
        <name>phosphoenolpyruvate</name>
        <dbReference type="ChEBI" id="CHEBI:58702"/>
    </ligand>
</feature>
<name>AROA_PARPJ</name>
<evidence type="ECO:0000255" key="1">
    <source>
        <dbReference type="HAMAP-Rule" id="MF_00210"/>
    </source>
</evidence>
<dbReference type="EC" id="2.5.1.19" evidence="1"/>
<dbReference type="EMBL" id="CP001052">
    <property type="protein sequence ID" value="ACD17397.1"/>
    <property type="molecule type" value="Genomic_DNA"/>
</dbReference>
<dbReference type="RefSeq" id="WP_012433976.1">
    <property type="nucleotide sequence ID" value="NC_010681.1"/>
</dbReference>
<dbReference type="SMR" id="B2T630"/>
<dbReference type="STRING" id="398527.Bphyt_3003"/>
<dbReference type="KEGG" id="bpy:Bphyt_3003"/>
<dbReference type="eggNOG" id="COG0128">
    <property type="taxonomic scope" value="Bacteria"/>
</dbReference>
<dbReference type="HOGENOM" id="CLU_024321_0_0_4"/>
<dbReference type="OrthoDB" id="9809920at2"/>
<dbReference type="UniPathway" id="UPA00053">
    <property type="reaction ID" value="UER00089"/>
</dbReference>
<dbReference type="Proteomes" id="UP000001739">
    <property type="component" value="Chromosome 1"/>
</dbReference>
<dbReference type="GO" id="GO:0005737">
    <property type="term" value="C:cytoplasm"/>
    <property type="evidence" value="ECO:0007669"/>
    <property type="project" value="UniProtKB-SubCell"/>
</dbReference>
<dbReference type="GO" id="GO:0003866">
    <property type="term" value="F:3-phosphoshikimate 1-carboxyvinyltransferase activity"/>
    <property type="evidence" value="ECO:0007669"/>
    <property type="project" value="UniProtKB-UniRule"/>
</dbReference>
<dbReference type="GO" id="GO:0008652">
    <property type="term" value="P:amino acid biosynthetic process"/>
    <property type="evidence" value="ECO:0007669"/>
    <property type="project" value="UniProtKB-KW"/>
</dbReference>
<dbReference type="GO" id="GO:0009073">
    <property type="term" value="P:aromatic amino acid family biosynthetic process"/>
    <property type="evidence" value="ECO:0007669"/>
    <property type="project" value="UniProtKB-KW"/>
</dbReference>
<dbReference type="GO" id="GO:0009423">
    <property type="term" value="P:chorismate biosynthetic process"/>
    <property type="evidence" value="ECO:0007669"/>
    <property type="project" value="UniProtKB-UniRule"/>
</dbReference>
<dbReference type="CDD" id="cd01556">
    <property type="entry name" value="EPSP_synthase"/>
    <property type="match status" value="1"/>
</dbReference>
<dbReference type="FunFam" id="3.65.10.10:FF:000003">
    <property type="entry name" value="3-phosphoshikimate 1-carboxyvinyltransferase"/>
    <property type="match status" value="1"/>
</dbReference>
<dbReference type="FunFam" id="3.65.10.10:FF:000004">
    <property type="entry name" value="3-phosphoshikimate 1-carboxyvinyltransferase"/>
    <property type="match status" value="1"/>
</dbReference>
<dbReference type="Gene3D" id="3.65.10.10">
    <property type="entry name" value="Enolpyruvate transferase domain"/>
    <property type="match status" value="2"/>
</dbReference>
<dbReference type="HAMAP" id="MF_00210">
    <property type="entry name" value="EPSP_synth"/>
    <property type="match status" value="1"/>
</dbReference>
<dbReference type="InterPro" id="IPR001986">
    <property type="entry name" value="Enolpyruvate_Tfrase_dom"/>
</dbReference>
<dbReference type="InterPro" id="IPR036968">
    <property type="entry name" value="Enolpyruvate_Tfrase_sf"/>
</dbReference>
<dbReference type="InterPro" id="IPR006264">
    <property type="entry name" value="EPSP_synthase"/>
</dbReference>
<dbReference type="InterPro" id="IPR023193">
    <property type="entry name" value="EPSP_synthase_CS"/>
</dbReference>
<dbReference type="InterPro" id="IPR013792">
    <property type="entry name" value="RNA3'P_cycl/enolpyr_Trfase_a/b"/>
</dbReference>
<dbReference type="NCBIfam" id="TIGR01356">
    <property type="entry name" value="aroA"/>
    <property type="match status" value="1"/>
</dbReference>
<dbReference type="PANTHER" id="PTHR21090">
    <property type="entry name" value="AROM/DEHYDROQUINATE SYNTHASE"/>
    <property type="match status" value="1"/>
</dbReference>
<dbReference type="PANTHER" id="PTHR21090:SF5">
    <property type="entry name" value="PENTAFUNCTIONAL AROM POLYPEPTIDE"/>
    <property type="match status" value="1"/>
</dbReference>
<dbReference type="Pfam" id="PF00275">
    <property type="entry name" value="EPSP_synthase"/>
    <property type="match status" value="1"/>
</dbReference>
<dbReference type="PIRSF" id="PIRSF000505">
    <property type="entry name" value="EPSPS"/>
    <property type="match status" value="1"/>
</dbReference>
<dbReference type="SUPFAM" id="SSF55205">
    <property type="entry name" value="EPT/RTPC-like"/>
    <property type="match status" value="1"/>
</dbReference>
<dbReference type="PROSITE" id="PS00104">
    <property type="entry name" value="EPSP_SYNTHASE_1"/>
    <property type="match status" value="1"/>
</dbReference>
<dbReference type="PROSITE" id="PS00885">
    <property type="entry name" value="EPSP_SYNTHASE_2"/>
    <property type="match status" value="1"/>
</dbReference>
<organism>
    <name type="scientific">Paraburkholderia phytofirmans (strain DSM 17436 / LMG 22146 / PsJN)</name>
    <name type="common">Burkholderia phytofirmans</name>
    <dbReference type="NCBI Taxonomy" id="398527"/>
    <lineage>
        <taxon>Bacteria</taxon>
        <taxon>Pseudomonadati</taxon>
        <taxon>Pseudomonadota</taxon>
        <taxon>Betaproteobacteria</taxon>
        <taxon>Burkholderiales</taxon>
        <taxon>Burkholderiaceae</taxon>
        <taxon>Paraburkholderia</taxon>
    </lineage>
</organism>
<accession>B2T630</accession>
<protein>
    <recommendedName>
        <fullName evidence="1">3-phosphoshikimate 1-carboxyvinyltransferase</fullName>
        <ecNumber evidence="1">2.5.1.19</ecNumber>
    </recommendedName>
    <alternativeName>
        <fullName evidence="1">5-enolpyruvylshikimate-3-phosphate synthase</fullName>
        <shortName evidence="1">EPSP synthase</shortName>
        <shortName evidence="1">EPSPS</shortName>
    </alternativeName>
</protein>